<accession>Q81WE7</accession>
<accession>Q6HUJ5</accession>
<accession>Q6KNT0</accession>
<reference key="1">
    <citation type="journal article" date="2003" name="Nature">
        <title>The genome sequence of Bacillus anthracis Ames and comparison to closely related bacteria.</title>
        <authorList>
            <person name="Read T.D."/>
            <person name="Peterson S.N."/>
            <person name="Tourasse N.J."/>
            <person name="Baillie L.W."/>
            <person name="Paulsen I.T."/>
            <person name="Nelson K.E."/>
            <person name="Tettelin H."/>
            <person name="Fouts D.E."/>
            <person name="Eisen J.A."/>
            <person name="Gill S.R."/>
            <person name="Holtzapple E.K."/>
            <person name="Okstad O.A."/>
            <person name="Helgason E."/>
            <person name="Rilstone J."/>
            <person name="Wu M."/>
            <person name="Kolonay J.F."/>
            <person name="Beanan M.J."/>
            <person name="Dodson R.J."/>
            <person name="Brinkac L.M."/>
            <person name="Gwinn M.L."/>
            <person name="DeBoy R.T."/>
            <person name="Madpu R."/>
            <person name="Daugherty S.C."/>
            <person name="Durkin A.S."/>
            <person name="Haft D.H."/>
            <person name="Nelson W.C."/>
            <person name="Peterson J.D."/>
            <person name="Pop M."/>
            <person name="Khouri H.M."/>
            <person name="Radune D."/>
            <person name="Benton J.L."/>
            <person name="Mahamoud Y."/>
            <person name="Jiang L."/>
            <person name="Hance I.R."/>
            <person name="Weidman J.F."/>
            <person name="Berry K.J."/>
            <person name="Plaut R.D."/>
            <person name="Wolf A.M."/>
            <person name="Watkins K.L."/>
            <person name="Nierman W.C."/>
            <person name="Hazen A."/>
            <person name="Cline R.T."/>
            <person name="Redmond C."/>
            <person name="Thwaite J.E."/>
            <person name="White O."/>
            <person name="Salzberg S.L."/>
            <person name="Thomason B."/>
            <person name="Friedlander A.M."/>
            <person name="Koehler T.M."/>
            <person name="Hanna P.C."/>
            <person name="Kolstoe A.-B."/>
            <person name="Fraser C.M."/>
        </authorList>
    </citation>
    <scope>NUCLEOTIDE SEQUENCE [LARGE SCALE GENOMIC DNA]</scope>
    <source>
        <strain>Ames / isolate Porton</strain>
    </source>
</reference>
<reference key="2">
    <citation type="submission" date="2004-01" db="EMBL/GenBank/DDBJ databases">
        <title>Complete genome sequence of Bacillus anthracis Sterne.</title>
        <authorList>
            <person name="Brettin T.S."/>
            <person name="Bruce D."/>
            <person name="Challacombe J.F."/>
            <person name="Gilna P."/>
            <person name="Han C."/>
            <person name="Hill K."/>
            <person name="Hitchcock P."/>
            <person name="Jackson P."/>
            <person name="Keim P."/>
            <person name="Longmire J."/>
            <person name="Lucas S."/>
            <person name="Okinaka R."/>
            <person name="Richardson P."/>
            <person name="Rubin E."/>
            <person name="Tice H."/>
        </authorList>
    </citation>
    <scope>NUCLEOTIDE SEQUENCE [LARGE SCALE GENOMIC DNA]</scope>
    <source>
        <strain>Sterne</strain>
    </source>
</reference>
<reference key="3">
    <citation type="journal article" date="2009" name="J. Bacteriol.">
        <title>The complete genome sequence of Bacillus anthracis Ames 'Ancestor'.</title>
        <authorList>
            <person name="Ravel J."/>
            <person name="Jiang L."/>
            <person name="Stanley S.T."/>
            <person name="Wilson M.R."/>
            <person name="Decker R.S."/>
            <person name="Read T.D."/>
            <person name="Worsham P."/>
            <person name="Keim P.S."/>
            <person name="Salzberg S.L."/>
            <person name="Fraser-Liggett C.M."/>
            <person name="Rasko D.A."/>
        </authorList>
    </citation>
    <scope>NUCLEOTIDE SEQUENCE [LARGE SCALE GENOMIC DNA]</scope>
    <source>
        <strain>Ames ancestor</strain>
    </source>
</reference>
<feature type="chain" id="PRO_1000053821" description="Bifunctional protein PyrR">
    <location>
        <begin position="1"/>
        <end position="180"/>
    </location>
</feature>
<feature type="short sequence motif" description="PRPP-binding" evidence="1">
    <location>
        <begin position="101"/>
        <end position="113"/>
    </location>
</feature>
<gene>
    <name evidence="1" type="primary">pyrR</name>
    <name type="ordered locus">BA_4030</name>
    <name type="ordered locus">GBAA_4030</name>
    <name type="ordered locus">BAS3742</name>
</gene>
<sequence length="180" mass="20409">MQEKAVVLDDQMIRRALTRISHEIVERNKGVDNCVLVGIKTRGIFIAQRLAERIGQIEGKEMEVGELDITLYRDDLTLQSKNKEPLVKGSDIPVDITKKKVILVDDVLYTGRTVRAAMDALMDLGRPSQIQLAVLVDRGHRELPIRADYVGKNIPTSSEERIEVDLQETDQQDRVSIYDK</sequence>
<comment type="function">
    <text evidence="1">Regulates transcriptional attenuation of the pyrimidine nucleotide (pyr) operon by binding in a uridine-dependent manner to specific sites on pyr mRNA. This disrupts an antiterminator hairpin in the RNA and favors formation of a downstream transcription terminator, leading to a reduced expression of downstream genes.</text>
</comment>
<comment type="function">
    <text evidence="1">Also displays a weak uracil phosphoribosyltransferase activity which is not physiologically significant.</text>
</comment>
<comment type="catalytic activity">
    <reaction evidence="1">
        <text>UMP + diphosphate = 5-phospho-alpha-D-ribose 1-diphosphate + uracil</text>
        <dbReference type="Rhea" id="RHEA:13017"/>
        <dbReference type="ChEBI" id="CHEBI:17568"/>
        <dbReference type="ChEBI" id="CHEBI:33019"/>
        <dbReference type="ChEBI" id="CHEBI:57865"/>
        <dbReference type="ChEBI" id="CHEBI:58017"/>
        <dbReference type="EC" id="2.4.2.9"/>
    </reaction>
</comment>
<comment type="subunit">
    <text evidence="1">Homodimer and homohexamer; in equilibrium.</text>
</comment>
<comment type="similarity">
    <text evidence="1">Belongs to the purine/pyrimidine phosphoribosyltransferase family. PyrR subfamily.</text>
</comment>
<organism>
    <name type="scientific">Bacillus anthracis</name>
    <dbReference type="NCBI Taxonomy" id="1392"/>
    <lineage>
        <taxon>Bacteria</taxon>
        <taxon>Bacillati</taxon>
        <taxon>Bacillota</taxon>
        <taxon>Bacilli</taxon>
        <taxon>Bacillales</taxon>
        <taxon>Bacillaceae</taxon>
        <taxon>Bacillus</taxon>
        <taxon>Bacillus cereus group</taxon>
    </lineage>
</organism>
<keyword id="KW-0328">Glycosyltransferase</keyword>
<keyword id="KW-1185">Reference proteome</keyword>
<keyword id="KW-0694">RNA-binding</keyword>
<keyword id="KW-0804">Transcription</keyword>
<keyword id="KW-0805">Transcription regulation</keyword>
<keyword id="KW-0806">Transcription termination</keyword>
<keyword id="KW-0808">Transferase</keyword>
<name>PYRR_BACAN</name>
<proteinExistence type="inferred from homology"/>
<dbReference type="EC" id="2.4.2.9" evidence="1"/>
<dbReference type="EMBL" id="AE016879">
    <property type="protein sequence ID" value="AAP27757.1"/>
    <property type="molecule type" value="Genomic_DNA"/>
</dbReference>
<dbReference type="EMBL" id="AE017334">
    <property type="protein sequence ID" value="AAT33147.1"/>
    <property type="molecule type" value="Genomic_DNA"/>
</dbReference>
<dbReference type="EMBL" id="AE017225">
    <property type="protein sequence ID" value="AAT56044.1"/>
    <property type="molecule type" value="Genomic_DNA"/>
</dbReference>
<dbReference type="RefSeq" id="NP_846271.1">
    <property type="nucleotide sequence ID" value="NC_003997.3"/>
</dbReference>
<dbReference type="RefSeq" id="WP_001156491.1">
    <property type="nucleotide sequence ID" value="NZ_WXXJ01000026.1"/>
</dbReference>
<dbReference type="RefSeq" id="YP_029993.1">
    <property type="nucleotide sequence ID" value="NC_005945.1"/>
</dbReference>
<dbReference type="SMR" id="Q81WE7"/>
<dbReference type="STRING" id="261594.GBAA_4030"/>
<dbReference type="DNASU" id="1086216"/>
<dbReference type="GeneID" id="75087028"/>
<dbReference type="KEGG" id="ban:BA_4030"/>
<dbReference type="KEGG" id="bar:GBAA_4030"/>
<dbReference type="KEGG" id="bat:BAS3742"/>
<dbReference type="PATRIC" id="fig|198094.11.peg.4001"/>
<dbReference type="eggNOG" id="COG2065">
    <property type="taxonomic scope" value="Bacteria"/>
</dbReference>
<dbReference type="HOGENOM" id="CLU_094234_2_1_9"/>
<dbReference type="OMA" id="PIQPDFC"/>
<dbReference type="OrthoDB" id="9802227at2"/>
<dbReference type="Proteomes" id="UP000000427">
    <property type="component" value="Chromosome"/>
</dbReference>
<dbReference type="Proteomes" id="UP000000594">
    <property type="component" value="Chromosome"/>
</dbReference>
<dbReference type="GO" id="GO:0003723">
    <property type="term" value="F:RNA binding"/>
    <property type="evidence" value="ECO:0007669"/>
    <property type="project" value="UniProtKB-UniRule"/>
</dbReference>
<dbReference type="GO" id="GO:0004845">
    <property type="term" value="F:uracil phosphoribosyltransferase activity"/>
    <property type="evidence" value="ECO:0007669"/>
    <property type="project" value="UniProtKB-UniRule"/>
</dbReference>
<dbReference type="GO" id="GO:0006353">
    <property type="term" value="P:DNA-templated transcription termination"/>
    <property type="evidence" value="ECO:0007669"/>
    <property type="project" value="UniProtKB-UniRule"/>
</dbReference>
<dbReference type="CDD" id="cd06223">
    <property type="entry name" value="PRTases_typeI"/>
    <property type="match status" value="1"/>
</dbReference>
<dbReference type="FunFam" id="3.40.50.2020:FF:000020">
    <property type="entry name" value="Bifunctional protein PyrR"/>
    <property type="match status" value="1"/>
</dbReference>
<dbReference type="Gene3D" id="3.40.50.2020">
    <property type="match status" value="1"/>
</dbReference>
<dbReference type="HAMAP" id="MF_01219">
    <property type="entry name" value="PyrR"/>
    <property type="match status" value="1"/>
</dbReference>
<dbReference type="InterPro" id="IPR000836">
    <property type="entry name" value="PRibTrfase_dom"/>
</dbReference>
<dbReference type="InterPro" id="IPR029057">
    <property type="entry name" value="PRTase-like"/>
</dbReference>
<dbReference type="InterPro" id="IPR023050">
    <property type="entry name" value="PyrR"/>
</dbReference>
<dbReference type="InterPro" id="IPR050137">
    <property type="entry name" value="PyrR_bifunctional"/>
</dbReference>
<dbReference type="NCBIfam" id="NF003545">
    <property type="entry name" value="PRK05205.1-1"/>
    <property type="match status" value="1"/>
</dbReference>
<dbReference type="NCBIfam" id="NF003547">
    <property type="entry name" value="PRK05205.1-3"/>
    <property type="match status" value="1"/>
</dbReference>
<dbReference type="NCBIfam" id="NF003548">
    <property type="entry name" value="PRK05205.1-4"/>
    <property type="match status" value="1"/>
</dbReference>
<dbReference type="NCBIfam" id="NF003549">
    <property type="entry name" value="PRK05205.1-5"/>
    <property type="match status" value="1"/>
</dbReference>
<dbReference type="PANTHER" id="PTHR11608">
    <property type="entry name" value="BIFUNCTIONAL PROTEIN PYRR"/>
    <property type="match status" value="1"/>
</dbReference>
<dbReference type="PANTHER" id="PTHR11608:SF0">
    <property type="entry name" value="BIFUNCTIONAL PROTEIN PYRR"/>
    <property type="match status" value="1"/>
</dbReference>
<dbReference type="Pfam" id="PF00156">
    <property type="entry name" value="Pribosyltran"/>
    <property type="match status" value="1"/>
</dbReference>
<dbReference type="SUPFAM" id="SSF53271">
    <property type="entry name" value="PRTase-like"/>
    <property type="match status" value="1"/>
</dbReference>
<evidence type="ECO:0000255" key="1">
    <source>
        <dbReference type="HAMAP-Rule" id="MF_01219"/>
    </source>
</evidence>
<protein>
    <recommendedName>
        <fullName evidence="1">Bifunctional protein PyrR</fullName>
    </recommendedName>
    <domain>
        <recommendedName>
            <fullName evidence="1">Pyrimidine operon regulatory protein</fullName>
        </recommendedName>
    </domain>
    <domain>
        <recommendedName>
            <fullName evidence="1">Uracil phosphoribosyltransferase</fullName>
            <shortName evidence="1">UPRTase</shortName>
            <ecNumber evidence="1">2.4.2.9</ecNumber>
        </recommendedName>
    </domain>
</protein>